<protein>
    <recommendedName>
        <fullName>Actin-related protein 2/3 complex subunit 2</fullName>
    </recommendedName>
    <alternativeName>
        <fullName>Arp2/3 complex 34 kDa subunit</fullName>
        <shortName>p34-ARC</shortName>
    </alternativeName>
</protein>
<organism>
    <name type="scientific">Bos taurus</name>
    <name type="common">Bovine</name>
    <dbReference type="NCBI Taxonomy" id="9913"/>
    <lineage>
        <taxon>Eukaryota</taxon>
        <taxon>Metazoa</taxon>
        <taxon>Chordata</taxon>
        <taxon>Craniata</taxon>
        <taxon>Vertebrata</taxon>
        <taxon>Euteleostomi</taxon>
        <taxon>Mammalia</taxon>
        <taxon>Eutheria</taxon>
        <taxon>Laurasiatheria</taxon>
        <taxon>Artiodactyla</taxon>
        <taxon>Ruminantia</taxon>
        <taxon>Pecora</taxon>
        <taxon>Bovidae</taxon>
        <taxon>Bovinae</taxon>
        <taxon>Bos</taxon>
    </lineage>
</organism>
<evidence type="ECO:0000250" key="1">
    <source>
        <dbReference type="UniProtKB" id="O15144"/>
    </source>
</evidence>
<evidence type="ECO:0000250" key="2">
    <source>
        <dbReference type="UniProtKB" id="P61160"/>
    </source>
</evidence>
<evidence type="ECO:0000250" key="3">
    <source>
        <dbReference type="UniProtKB" id="Q9CVB6"/>
    </source>
</evidence>
<evidence type="ECO:0000269" key="4">
    <source>
    </source>
</evidence>
<evidence type="ECO:0000269" key="5">
    <source>
    </source>
</evidence>
<evidence type="ECO:0000305" key="6"/>
<evidence type="ECO:0007829" key="7">
    <source>
        <dbReference type="PDB" id="1K8K"/>
    </source>
</evidence>
<evidence type="ECO:0007829" key="8">
    <source>
        <dbReference type="PDB" id="1U2V"/>
    </source>
</evidence>
<evidence type="ECO:0007829" key="9">
    <source>
        <dbReference type="PDB" id="8TAH"/>
    </source>
</evidence>
<comment type="function">
    <text evidence="1">Actin-binding component of the Arp2/3 complex, a multiprotein complex that mediates actin polymerization upon stimulation by nucleation-promoting factor (NPF). The Arp2/3 complex mediates the formation of branched actin networks in the cytoplasm, providing the force for cell motility. Seems to contact the mother actin filament. In addition to its role in the cytoplasmic cytoskeleton, the Arp2/3 complex also promotes actin polymerization in the nucleus, thereby regulating gene transcription and repair of damaged DNA. The Arp2/3 complex promotes homologous recombination (HR) repair in response to DNA damage by promoting nuclear actin polymerization, leading to drive motility of double-strand breaks (DSBs).</text>
</comment>
<comment type="subunit">
    <text evidence="2 3 4 5">Component of the Arp2/3 complex composed of ACTR2/ARP2, ACTR3/ARP3, ARPC1B/p41-ARC, ARPC2/p34-ARC, ARPC3/p21-ARC, ARPC4/p20-ARC and ARPC5/p16-ARC (PubMed:11721045, PubMed:15505213). Interacts with SHANK3; the interaction probably mediates the association of SHANK3 with the Arp2/3 complex (By similarity). Interacts with DNAI3; this interaction reduces binding of the Arp2/3 complex to the VCA domain of nucleation promoting factors (By similarity).</text>
</comment>
<comment type="subcellular location">
    <subcellularLocation>
        <location evidence="1">Cytoplasm</location>
        <location evidence="1">Cytoskeleton</location>
    </subcellularLocation>
    <subcellularLocation>
        <location evidence="1">Cell projection</location>
    </subcellularLocation>
    <subcellularLocation>
        <location evidence="3">Synapse</location>
        <location evidence="3">Synaptosome</location>
    </subcellularLocation>
    <subcellularLocation>
        <location evidence="1">Nucleus</location>
    </subcellularLocation>
</comment>
<comment type="similarity">
    <text evidence="6">Belongs to the ARPC2 family.</text>
</comment>
<feature type="chain" id="PRO_0000246170" description="Actin-related protein 2/3 complex subunit 2">
    <location>
        <begin position="1"/>
        <end position="300"/>
    </location>
</feature>
<feature type="modified residue" description="N6-acetyllysine" evidence="1">
    <location>
        <position position="275"/>
    </location>
</feature>
<feature type="modified residue" description="N6-acetyllysine" evidence="1">
    <location>
        <position position="295"/>
    </location>
</feature>
<feature type="helix" evidence="7">
    <location>
        <begin position="9"/>
        <end position="24"/>
    </location>
</feature>
<feature type="strand" evidence="7">
    <location>
        <begin position="32"/>
        <end position="37"/>
    </location>
</feature>
<feature type="turn" evidence="7">
    <location>
        <begin position="38"/>
        <end position="40"/>
    </location>
</feature>
<feature type="strand" evidence="7">
    <location>
        <begin position="41"/>
        <end position="46"/>
    </location>
</feature>
<feature type="helix" evidence="7">
    <location>
        <begin position="48"/>
        <end position="50"/>
    </location>
</feature>
<feature type="strand" evidence="7">
    <location>
        <begin position="54"/>
        <end position="60"/>
    </location>
</feature>
<feature type="helix" evidence="7">
    <location>
        <begin position="64"/>
        <end position="68"/>
    </location>
</feature>
<feature type="turn" evidence="7">
    <location>
        <begin position="69"/>
        <end position="71"/>
    </location>
</feature>
<feature type="helix" evidence="7">
    <location>
        <begin position="72"/>
        <end position="80"/>
    </location>
</feature>
<feature type="helix" evidence="7">
    <location>
        <begin position="81"/>
        <end position="83"/>
    </location>
</feature>
<feature type="strand" evidence="7">
    <location>
        <begin position="84"/>
        <end position="86"/>
    </location>
</feature>
<feature type="strand" evidence="7">
    <location>
        <begin position="92"/>
        <end position="98"/>
    </location>
</feature>
<feature type="helix" evidence="7">
    <location>
        <begin position="106"/>
        <end position="114"/>
    </location>
</feature>
<feature type="helix" evidence="7">
    <location>
        <begin position="116"/>
        <end position="134"/>
    </location>
</feature>
<feature type="strand" evidence="7">
    <location>
        <begin position="142"/>
        <end position="147"/>
    </location>
</feature>
<feature type="strand" evidence="7">
    <location>
        <begin position="150"/>
        <end position="156"/>
    </location>
</feature>
<feature type="strand" evidence="7">
    <location>
        <begin position="161"/>
        <end position="168"/>
    </location>
</feature>
<feature type="helix" evidence="7">
    <location>
        <begin position="172"/>
        <end position="186"/>
    </location>
</feature>
<feature type="helix" evidence="7">
    <location>
        <begin position="188"/>
        <end position="190"/>
    </location>
</feature>
<feature type="strand" evidence="8">
    <location>
        <begin position="193"/>
        <end position="195"/>
    </location>
</feature>
<feature type="strand" evidence="7">
    <location>
        <begin position="197"/>
        <end position="204"/>
    </location>
</feature>
<feature type="helix" evidence="7">
    <location>
        <begin position="207"/>
        <end position="209"/>
    </location>
</feature>
<feature type="turn" evidence="7">
    <location>
        <begin position="210"/>
        <end position="213"/>
    </location>
</feature>
<feature type="strand" evidence="7">
    <location>
        <begin position="220"/>
        <end position="227"/>
    </location>
</feature>
<feature type="helix" evidence="7">
    <location>
        <begin position="229"/>
        <end position="232"/>
    </location>
</feature>
<feature type="turn" evidence="7">
    <location>
        <begin position="234"/>
        <end position="236"/>
    </location>
</feature>
<feature type="helix" evidence="7">
    <location>
        <begin position="237"/>
        <end position="244"/>
    </location>
</feature>
<feature type="helix" evidence="7">
    <location>
        <begin position="247"/>
        <end position="278"/>
    </location>
</feature>
<feature type="turn" evidence="9">
    <location>
        <begin position="282"/>
        <end position="284"/>
    </location>
</feature>
<dbReference type="EMBL" id="BC105136">
    <property type="protein sequence ID" value="AAI05137.1"/>
    <property type="molecule type" value="mRNA"/>
</dbReference>
<dbReference type="RefSeq" id="NP_001029885.1">
    <property type="nucleotide sequence ID" value="NM_001034713.2"/>
</dbReference>
<dbReference type="PDB" id="1K8K">
    <property type="method" value="X-ray"/>
    <property type="resolution" value="2.00 A"/>
    <property type="chains" value="D=1-300"/>
</dbReference>
<dbReference type="PDB" id="1TYQ">
    <property type="method" value="X-ray"/>
    <property type="resolution" value="2.55 A"/>
    <property type="chains" value="D=1-300"/>
</dbReference>
<dbReference type="PDB" id="1U2V">
    <property type="method" value="X-ray"/>
    <property type="resolution" value="2.55 A"/>
    <property type="chains" value="D=1-300"/>
</dbReference>
<dbReference type="PDB" id="2P9I">
    <property type="method" value="X-ray"/>
    <property type="resolution" value="2.46 A"/>
    <property type="chains" value="D=1-300"/>
</dbReference>
<dbReference type="PDB" id="2P9K">
    <property type="method" value="X-ray"/>
    <property type="resolution" value="2.59 A"/>
    <property type="chains" value="D=1-300"/>
</dbReference>
<dbReference type="PDB" id="2P9L">
    <property type="method" value="X-ray"/>
    <property type="resolution" value="2.65 A"/>
    <property type="chains" value="D=1-300"/>
</dbReference>
<dbReference type="PDB" id="2P9N">
    <property type="method" value="X-ray"/>
    <property type="resolution" value="2.85 A"/>
    <property type="chains" value="D=1-300"/>
</dbReference>
<dbReference type="PDB" id="2P9P">
    <property type="method" value="X-ray"/>
    <property type="resolution" value="2.90 A"/>
    <property type="chains" value="D=1-300"/>
</dbReference>
<dbReference type="PDB" id="2P9S">
    <property type="method" value="X-ray"/>
    <property type="resolution" value="2.68 A"/>
    <property type="chains" value="D=1-300"/>
</dbReference>
<dbReference type="PDB" id="2P9U">
    <property type="method" value="X-ray"/>
    <property type="resolution" value="2.75 A"/>
    <property type="chains" value="D=1-300"/>
</dbReference>
<dbReference type="PDB" id="3DXK">
    <property type="method" value="X-ray"/>
    <property type="resolution" value="2.70 A"/>
    <property type="chains" value="D=1-300"/>
</dbReference>
<dbReference type="PDB" id="3DXM">
    <property type="method" value="X-ray"/>
    <property type="resolution" value="2.85 A"/>
    <property type="chains" value="D=1-300"/>
</dbReference>
<dbReference type="PDB" id="3RSE">
    <property type="method" value="X-ray"/>
    <property type="resolution" value="2.65 A"/>
    <property type="chains" value="D=1-300"/>
</dbReference>
<dbReference type="PDB" id="3UKR">
    <property type="method" value="X-ray"/>
    <property type="resolution" value="2.48 A"/>
    <property type="chains" value="D=1-300"/>
</dbReference>
<dbReference type="PDB" id="3UKU">
    <property type="method" value="X-ray"/>
    <property type="resolution" value="2.75 A"/>
    <property type="chains" value="D=1-300"/>
</dbReference>
<dbReference type="PDB" id="3ULE">
    <property type="method" value="X-ray"/>
    <property type="resolution" value="2.50 A"/>
    <property type="chains" value="D=1-300"/>
</dbReference>
<dbReference type="PDB" id="4JD2">
    <property type="method" value="X-ray"/>
    <property type="resolution" value="3.08 A"/>
    <property type="chains" value="D=1-300"/>
</dbReference>
<dbReference type="PDB" id="4XEI">
    <property type="method" value="X-ray"/>
    <property type="resolution" value="3.87 A"/>
    <property type="chains" value="D=1-300"/>
</dbReference>
<dbReference type="PDB" id="4XF2">
    <property type="method" value="X-ray"/>
    <property type="resolution" value="5.00 A"/>
    <property type="chains" value="D/W=1-300"/>
</dbReference>
<dbReference type="PDB" id="6DEC">
    <property type="method" value="X-ray"/>
    <property type="resolution" value="4.60 A"/>
    <property type="chains" value="D/K=1-300"/>
</dbReference>
<dbReference type="PDB" id="7JPN">
    <property type="method" value="EM"/>
    <property type="resolution" value="3.24 A"/>
    <property type="chains" value="D=1-300"/>
</dbReference>
<dbReference type="PDB" id="7T5Q">
    <property type="method" value="EM"/>
    <property type="resolution" value="3.40 A"/>
    <property type="chains" value="D=1-300"/>
</dbReference>
<dbReference type="PDB" id="7TPT">
    <property type="method" value="EM"/>
    <property type="resolution" value="3.90 A"/>
    <property type="chains" value="D=1-300"/>
</dbReference>
<dbReference type="PDB" id="8TAH">
    <property type="method" value="EM"/>
    <property type="resolution" value="2.89 A"/>
    <property type="chains" value="D=1-300"/>
</dbReference>
<dbReference type="PDB" id="9DLX">
    <property type="method" value="EM"/>
    <property type="resolution" value="2.91 A"/>
    <property type="chains" value="D=1-285"/>
</dbReference>
<dbReference type="PDB" id="9DLZ">
    <property type="method" value="EM"/>
    <property type="resolution" value="3.40 A"/>
    <property type="chains" value="D=1-285"/>
</dbReference>
<dbReference type="PDBsum" id="1K8K"/>
<dbReference type="PDBsum" id="1TYQ"/>
<dbReference type="PDBsum" id="1U2V"/>
<dbReference type="PDBsum" id="2P9I"/>
<dbReference type="PDBsum" id="2P9K"/>
<dbReference type="PDBsum" id="2P9L"/>
<dbReference type="PDBsum" id="2P9N"/>
<dbReference type="PDBsum" id="2P9P"/>
<dbReference type="PDBsum" id="2P9S"/>
<dbReference type="PDBsum" id="2P9U"/>
<dbReference type="PDBsum" id="3DXK"/>
<dbReference type="PDBsum" id="3DXM"/>
<dbReference type="PDBsum" id="3RSE"/>
<dbReference type="PDBsum" id="3UKR"/>
<dbReference type="PDBsum" id="3UKU"/>
<dbReference type="PDBsum" id="3ULE"/>
<dbReference type="PDBsum" id="4JD2"/>
<dbReference type="PDBsum" id="4XEI"/>
<dbReference type="PDBsum" id="4XF2"/>
<dbReference type="PDBsum" id="6DEC"/>
<dbReference type="PDBsum" id="7JPN"/>
<dbReference type="PDBsum" id="7T5Q"/>
<dbReference type="PDBsum" id="7TPT"/>
<dbReference type="PDBsum" id="8TAH"/>
<dbReference type="PDBsum" id="9DLX"/>
<dbReference type="PDBsum" id="9DLZ"/>
<dbReference type="EMDB" id="EMD-22416"/>
<dbReference type="EMDB" id="EMD-25707"/>
<dbReference type="EMDB" id="EMD-41135"/>
<dbReference type="EMDB" id="EMD-46992"/>
<dbReference type="EMDB" id="EMD-46993"/>
<dbReference type="SMR" id="Q3MHR7"/>
<dbReference type="BioGRID" id="197405">
    <property type="interactions" value="2"/>
</dbReference>
<dbReference type="DIP" id="DIP-29792N"/>
<dbReference type="FunCoup" id="Q3MHR7">
    <property type="interactions" value="3537"/>
</dbReference>
<dbReference type="IntAct" id="Q3MHR7">
    <property type="interactions" value="4"/>
</dbReference>
<dbReference type="STRING" id="9913.ENSBTAP00000069123"/>
<dbReference type="PaxDb" id="9913-ENSBTAP00000013707"/>
<dbReference type="PeptideAtlas" id="Q3MHR7"/>
<dbReference type="Ensembl" id="ENSBTAT00000013707.4">
    <property type="protein sequence ID" value="ENSBTAP00000013707.2"/>
    <property type="gene ID" value="ENSBTAG00000010386.4"/>
</dbReference>
<dbReference type="GeneID" id="540838"/>
<dbReference type="KEGG" id="bta:540838"/>
<dbReference type="CTD" id="10109"/>
<dbReference type="VEuPathDB" id="HostDB:ENSBTAG00000010386"/>
<dbReference type="VGNC" id="VGNC:55326">
    <property type="gene designation" value="ARPC2"/>
</dbReference>
<dbReference type="eggNOG" id="KOG2826">
    <property type="taxonomic scope" value="Eukaryota"/>
</dbReference>
<dbReference type="GeneTree" id="ENSGT00390000016794"/>
<dbReference type="HOGENOM" id="CLU_059439_2_0_1"/>
<dbReference type="InParanoid" id="Q3MHR7"/>
<dbReference type="OMA" id="FRSYFHY"/>
<dbReference type="OrthoDB" id="148331at2759"/>
<dbReference type="TreeFam" id="TF315006"/>
<dbReference type="Reactome" id="R-BTA-2029482">
    <property type="pathway name" value="Regulation of actin dynamics for phagocytic cup formation"/>
</dbReference>
<dbReference type="Reactome" id="R-BTA-3928662">
    <property type="pathway name" value="EPHB-mediated forward signaling"/>
</dbReference>
<dbReference type="Reactome" id="R-BTA-5663213">
    <property type="pathway name" value="RHO GTPases Activate WASPs and WAVEs"/>
</dbReference>
<dbReference type="Reactome" id="R-BTA-8856828">
    <property type="pathway name" value="Clathrin-mediated endocytosis"/>
</dbReference>
<dbReference type="CD-CODE" id="D7FE2080">
    <property type="entry name" value="Nucleolus"/>
</dbReference>
<dbReference type="EvolutionaryTrace" id="Q3MHR7"/>
<dbReference type="Proteomes" id="UP000009136">
    <property type="component" value="Chromosome 2"/>
</dbReference>
<dbReference type="Bgee" id="ENSBTAG00000010386">
    <property type="expression patterns" value="Expressed in blood and 104 other cell types or tissues"/>
</dbReference>
<dbReference type="GO" id="GO:0005885">
    <property type="term" value="C:Arp2/3 protein complex"/>
    <property type="evidence" value="ECO:0000250"/>
    <property type="project" value="UniProtKB"/>
</dbReference>
<dbReference type="GO" id="GO:0005829">
    <property type="term" value="C:cytosol"/>
    <property type="evidence" value="ECO:0000304"/>
    <property type="project" value="Reactome"/>
</dbReference>
<dbReference type="GO" id="GO:0005768">
    <property type="term" value="C:endosome"/>
    <property type="evidence" value="ECO:0007669"/>
    <property type="project" value="Ensembl"/>
</dbReference>
<dbReference type="GO" id="GO:0005925">
    <property type="term" value="C:focal adhesion"/>
    <property type="evidence" value="ECO:0007669"/>
    <property type="project" value="Ensembl"/>
</dbReference>
<dbReference type="GO" id="GO:0098978">
    <property type="term" value="C:glutamatergic synapse"/>
    <property type="evidence" value="ECO:0007669"/>
    <property type="project" value="Ensembl"/>
</dbReference>
<dbReference type="GO" id="GO:0030027">
    <property type="term" value="C:lamellipodium"/>
    <property type="evidence" value="ECO:0007669"/>
    <property type="project" value="Ensembl"/>
</dbReference>
<dbReference type="GO" id="GO:0036195">
    <property type="term" value="C:muscle cell projection membrane"/>
    <property type="evidence" value="ECO:0007669"/>
    <property type="project" value="Ensembl"/>
</dbReference>
<dbReference type="GO" id="GO:0043005">
    <property type="term" value="C:neuron projection"/>
    <property type="evidence" value="ECO:0007669"/>
    <property type="project" value="UniProtKB-KW"/>
</dbReference>
<dbReference type="GO" id="GO:0005654">
    <property type="term" value="C:nucleoplasm"/>
    <property type="evidence" value="ECO:0007669"/>
    <property type="project" value="Ensembl"/>
</dbReference>
<dbReference type="GO" id="GO:0005634">
    <property type="term" value="C:nucleus"/>
    <property type="evidence" value="ECO:0000250"/>
    <property type="project" value="UniProtKB"/>
</dbReference>
<dbReference type="GO" id="GO:0098794">
    <property type="term" value="C:postsynapse"/>
    <property type="evidence" value="ECO:0007669"/>
    <property type="project" value="Ensembl"/>
</dbReference>
<dbReference type="GO" id="GO:0035861">
    <property type="term" value="C:site of double-strand break"/>
    <property type="evidence" value="ECO:0000250"/>
    <property type="project" value="UniProtKB"/>
</dbReference>
<dbReference type="GO" id="GO:0030672">
    <property type="term" value="C:synaptic vesicle membrane"/>
    <property type="evidence" value="ECO:0007669"/>
    <property type="project" value="Ensembl"/>
</dbReference>
<dbReference type="GO" id="GO:0051015">
    <property type="term" value="F:actin filament binding"/>
    <property type="evidence" value="ECO:0000318"/>
    <property type="project" value="GO_Central"/>
</dbReference>
<dbReference type="GO" id="GO:0005200">
    <property type="term" value="F:structural constituent of cytoskeleton"/>
    <property type="evidence" value="ECO:0000318"/>
    <property type="project" value="GO_Central"/>
</dbReference>
<dbReference type="GO" id="GO:0030041">
    <property type="term" value="P:actin filament polymerization"/>
    <property type="evidence" value="ECO:0007669"/>
    <property type="project" value="InterPro"/>
</dbReference>
<dbReference type="GO" id="GO:0034314">
    <property type="term" value="P:Arp2/3 complex-mediated actin nucleation"/>
    <property type="evidence" value="ECO:0000318"/>
    <property type="project" value="GO_Central"/>
</dbReference>
<dbReference type="GO" id="GO:0030838">
    <property type="term" value="P:positive regulation of actin filament polymerization"/>
    <property type="evidence" value="ECO:0007669"/>
    <property type="project" value="Ensembl"/>
</dbReference>
<dbReference type="GO" id="GO:0010592">
    <property type="term" value="P:positive regulation of lamellipodium assembly"/>
    <property type="evidence" value="ECO:0007669"/>
    <property type="project" value="Ensembl"/>
</dbReference>
<dbReference type="GO" id="GO:1900026">
    <property type="term" value="P:positive regulation of substrate adhesion-dependent cell spreading"/>
    <property type="evidence" value="ECO:0007669"/>
    <property type="project" value="Ensembl"/>
</dbReference>
<dbReference type="FunFam" id="3.30.1460.20:FF:000002">
    <property type="entry name" value="Arp2/3 complex 34 kDa subunit"/>
    <property type="match status" value="1"/>
</dbReference>
<dbReference type="FunFam" id="3.30.1460.20:FF:000004">
    <property type="entry name" value="Arp2/3 complex 34 kDa subunit"/>
    <property type="match status" value="1"/>
</dbReference>
<dbReference type="Gene3D" id="3.30.1460.20">
    <property type="match status" value="2"/>
</dbReference>
<dbReference type="InterPro" id="IPR007188">
    <property type="entry name" value="ARPC2"/>
</dbReference>
<dbReference type="InterPro" id="IPR034666">
    <property type="entry name" value="ARPC2/4"/>
</dbReference>
<dbReference type="PANTHER" id="PTHR12058:SF0">
    <property type="entry name" value="ACTIN-RELATED PROTEIN 2_3 COMPLEX SUBUNIT 2"/>
    <property type="match status" value="1"/>
</dbReference>
<dbReference type="PANTHER" id="PTHR12058">
    <property type="entry name" value="ARP2/3 COMPLEX 34 KDA SUBUNIT"/>
    <property type="match status" value="1"/>
</dbReference>
<dbReference type="Pfam" id="PF04045">
    <property type="entry name" value="P34-Arc"/>
    <property type="match status" value="1"/>
</dbReference>
<dbReference type="SUPFAM" id="SSF69645">
    <property type="entry name" value="Arp2/3 complex subunits"/>
    <property type="match status" value="2"/>
</dbReference>
<reference key="1">
    <citation type="submission" date="2005-09" db="EMBL/GenBank/DDBJ databases">
        <authorList>
            <consortium name="NIH - Mammalian Gene Collection (MGC) project"/>
        </authorList>
    </citation>
    <scope>NUCLEOTIDE SEQUENCE [LARGE SCALE MRNA]</scope>
    <source>
        <strain>Crossbred X Angus</strain>
        <tissue>Ileum</tissue>
    </source>
</reference>
<reference key="2">
    <citation type="journal article" date="2001" name="Science">
        <title>Crystal structure of Arp2/3 complex.</title>
        <authorList>
            <person name="Robinson R.C."/>
            <person name="Turbedsky K."/>
            <person name="Kaiser D.A."/>
            <person name="Marchand J.-B."/>
            <person name="Higgs H.N."/>
            <person name="Choe S."/>
            <person name="Pollard T.D."/>
        </authorList>
    </citation>
    <scope>X-RAY CRYSTALLOGRAPHY (2.0 ANGSTROMS) OF THE ARP2/3 COMPLEX</scope>
</reference>
<reference key="3">
    <citation type="journal article" date="2004" name="Proc. Natl. Acad. Sci. U.S.A.">
        <title>Crystal structures of actin-related protein 2/3 complex with bound ATP or ADP.</title>
        <authorList>
            <person name="Nolen B.J."/>
            <person name="Littlefield R.S."/>
            <person name="Pollard T.D."/>
        </authorList>
    </citation>
    <scope>X-RAY CRYSTALLOGRAPHY (2.55 ANGSTROMS) OF THE ARP2/3 COMPLEX WITH BOUND ATP</scope>
</reference>
<accession>Q3MHR7</accession>
<keyword id="KW-0002">3D-structure</keyword>
<keyword id="KW-0007">Acetylation</keyword>
<keyword id="KW-0009">Actin-binding</keyword>
<keyword id="KW-0966">Cell projection</keyword>
<keyword id="KW-0963">Cytoplasm</keyword>
<keyword id="KW-0206">Cytoskeleton</keyword>
<keyword id="KW-0539">Nucleus</keyword>
<keyword id="KW-1185">Reference proteome</keyword>
<keyword id="KW-0770">Synapse</keyword>
<keyword id="KW-0771">Synaptosome</keyword>
<name>ARPC2_BOVIN</name>
<gene>
    <name type="primary">ARPC2</name>
</gene>
<sequence>MILLEVNNRIIEETLALKFENAAAGNKPEAVEVTFADFDGVLYHISNPNGDKTKVMVSISLKFYKELQAHGADELLKRVYGSYLVNPESGYNVSLLYDLENLPASKDSIVHQAGMLKRNCFASVFEKYFQFQEEGKEGENRAVIHYRDDETMYVESKKDRVTVVFSTVFKDDDDVVIGKVFMQEFKEGRRASHTAPQVLFSHREPPLELKDTDAAVGDNIGYITFVLFPRHTNASARDNTINLIHTFRDYLHYHIKCSKAYIHTRMRAKTSDFLKVLNRARPDAEKKEMKTITGKTFSSR</sequence>
<proteinExistence type="evidence at protein level"/>